<reference key="1">
    <citation type="submission" date="2008-02" db="EMBL/GenBank/DDBJ databases">
        <title>Complete sequence of Pseudomonas putida W619.</title>
        <authorList>
            <person name="Copeland A."/>
            <person name="Lucas S."/>
            <person name="Lapidus A."/>
            <person name="Barry K."/>
            <person name="Detter J.C."/>
            <person name="Glavina del Rio T."/>
            <person name="Dalin E."/>
            <person name="Tice H."/>
            <person name="Pitluck S."/>
            <person name="Chain P."/>
            <person name="Malfatti S."/>
            <person name="Shin M."/>
            <person name="Vergez L."/>
            <person name="Schmutz J."/>
            <person name="Larimer F."/>
            <person name="Land M."/>
            <person name="Hauser L."/>
            <person name="Kyrpides N."/>
            <person name="Kim E."/>
            <person name="Taghavi S."/>
            <person name="Vangronsveld D."/>
            <person name="van der Lelie D."/>
            <person name="Richardson P."/>
        </authorList>
    </citation>
    <scope>NUCLEOTIDE SEQUENCE [LARGE SCALE GENOMIC DNA]</scope>
    <source>
        <strain>W619</strain>
    </source>
</reference>
<sequence length="352" mass="37061">MSKQPSLSYKDAGVDIDAGEALVERIKGVAKRTARPEVMGGLGGFGALCEIPAGYKQPVLVSGTDGVGTKLRLALNLNKHDSIGQDLVAMCVNDLVVCGAEPLFFLDYYATGKLNVDVAATVVTGIGAGCELAGCSLVGGETAEMPGMYEGEDYDLAGFCVGVVEKAEIIDGSKVATGDALIALPSSGPHSNGYSLIRKILEVSATDIENTQLDGKPLTDLLMAPTRIYVKPLLQLIKQTGAVKAMAHITGGGLLDNIPRVLPKNAQAVVDVASWQRPAVFDFLQEKGNVDEHEMHRVLNCGVGMVICVAQDQVEAALNVLRAEGEQPWVIGRIEQAAEGAAQVELQNLKAH</sequence>
<keyword id="KW-0067">ATP-binding</keyword>
<keyword id="KW-0963">Cytoplasm</keyword>
<keyword id="KW-0436">Ligase</keyword>
<keyword id="KW-0547">Nucleotide-binding</keyword>
<keyword id="KW-0658">Purine biosynthesis</keyword>
<organism>
    <name type="scientific">Pseudomonas putida (strain W619)</name>
    <dbReference type="NCBI Taxonomy" id="390235"/>
    <lineage>
        <taxon>Bacteria</taxon>
        <taxon>Pseudomonadati</taxon>
        <taxon>Pseudomonadota</taxon>
        <taxon>Gammaproteobacteria</taxon>
        <taxon>Pseudomonadales</taxon>
        <taxon>Pseudomonadaceae</taxon>
        <taxon>Pseudomonas</taxon>
    </lineage>
</organism>
<proteinExistence type="inferred from homology"/>
<accession>B1J1M3</accession>
<protein>
    <recommendedName>
        <fullName evidence="1">Phosphoribosylformylglycinamidine cyclo-ligase</fullName>
        <ecNumber evidence="1">6.3.3.1</ecNumber>
    </recommendedName>
    <alternativeName>
        <fullName evidence="1">AIR synthase</fullName>
    </alternativeName>
    <alternativeName>
        <fullName evidence="1">AIRS</fullName>
    </alternativeName>
    <alternativeName>
        <fullName evidence="1">Phosphoribosyl-aminoimidazole synthetase</fullName>
    </alternativeName>
</protein>
<evidence type="ECO:0000255" key="1">
    <source>
        <dbReference type="HAMAP-Rule" id="MF_00741"/>
    </source>
</evidence>
<comment type="catalytic activity">
    <reaction evidence="1">
        <text>2-formamido-N(1)-(5-O-phospho-beta-D-ribosyl)acetamidine + ATP = 5-amino-1-(5-phospho-beta-D-ribosyl)imidazole + ADP + phosphate + H(+)</text>
        <dbReference type="Rhea" id="RHEA:23032"/>
        <dbReference type="ChEBI" id="CHEBI:15378"/>
        <dbReference type="ChEBI" id="CHEBI:30616"/>
        <dbReference type="ChEBI" id="CHEBI:43474"/>
        <dbReference type="ChEBI" id="CHEBI:137981"/>
        <dbReference type="ChEBI" id="CHEBI:147287"/>
        <dbReference type="ChEBI" id="CHEBI:456216"/>
        <dbReference type="EC" id="6.3.3.1"/>
    </reaction>
</comment>
<comment type="pathway">
    <text evidence="1">Purine metabolism; IMP biosynthesis via de novo pathway; 5-amino-1-(5-phospho-D-ribosyl)imidazole from N(2)-formyl-N(1)-(5-phospho-D-ribosyl)glycinamide: step 2/2.</text>
</comment>
<comment type="subcellular location">
    <subcellularLocation>
        <location evidence="1">Cytoplasm</location>
    </subcellularLocation>
</comment>
<comment type="similarity">
    <text evidence="1">Belongs to the AIR synthase family.</text>
</comment>
<gene>
    <name evidence="1" type="primary">purM</name>
    <name type="ordered locus">PputW619_1223</name>
</gene>
<dbReference type="EC" id="6.3.3.1" evidence="1"/>
<dbReference type="EMBL" id="CP000949">
    <property type="protein sequence ID" value="ACA71728.1"/>
    <property type="molecule type" value="Genomic_DNA"/>
</dbReference>
<dbReference type="SMR" id="B1J1M3"/>
<dbReference type="STRING" id="390235.PputW619_1223"/>
<dbReference type="KEGG" id="ppw:PputW619_1223"/>
<dbReference type="eggNOG" id="COG0150">
    <property type="taxonomic scope" value="Bacteria"/>
</dbReference>
<dbReference type="HOGENOM" id="CLU_047116_0_0_6"/>
<dbReference type="OrthoDB" id="9777881at2"/>
<dbReference type="UniPathway" id="UPA00074">
    <property type="reaction ID" value="UER00129"/>
</dbReference>
<dbReference type="GO" id="GO:0005829">
    <property type="term" value="C:cytosol"/>
    <property type="evidence" value="ECO:0007669"/>
    <property type="project" value="TreeGrafter"/>
</dbReference>
<dbReference type="GO" id="GO:0005524">
    <property type="term" value="F:ATP binding"/>
    <property type="evidence" value="ECO:0007669"/>
    <property type="project" value="UniProtKB-KW"/>
</dbReference>
<dbReference type="GO" id="GO:0004637">
    <property type="term" value="F:phosphoribosylamine-glycine ligase activity"/>
    <property type="evidence" value="ECO:0007669"/>
    <property type="project" value="TreeGrafter"/>
</dbReference>
<dbReference type="GO" id="GO:0004641">
    <property type="term" value="F:phosphoribosylformylglycinamidine cyclo-ligase activity"/>
    <property type="evidence" value="ECO:0007669"/>
    <property type="project" value="UniProtKB-UniRule"/>
</dbReference>
<dbReference type="GO" id="GO:0006189">
    <property type="term" value="P:'de novo' IMP biosynthetic process"/>
    <property type="evidence" value="ECO:0007669"/>
    <property type="project" value="UniProtKB-UniRule"/>
</dbReference>
<dbReference type="GO" id="GO:0046084">
    <property type="term" value="P:adenine biosynthetic process"/>
    <property type="evidence" value="ECO:0007669"/>
    <property type="project" value="TreeGrafter"/>
</dbReference>
<dbReference type="CDD" id="cd02196">
    <property type="entry name" value="PurM"/>
    <property type="match status" value="1"/>
</dbReference>
<dbReference type="FunFam" id="3.30.1330.10:FF:000001">
    <property type="entry name" value="Phosphoribosylformylglycinamidine cyclo-ligase"/>
    <property type="match status" value="1"/>
</dbReference>
<dbReference type="FunFam" id="3.90.650.10:FF:000001">
    <property type="entry name" value="Phosphoribosylformylglycinamidine cyclo-ligase"/>
    <property type="match status" value="1"/>
</dbReference>
<dbReference type="Gene3D" id="3.90.650.10">
    <property type="entry name" value="PurM-like C-terminal domain"/>
    <property type="match status" value="1"/>
</dbReference>
<dbReference type="Gene3D" id="3.30.1330.10">
    <property type="entry name" value="PurM-like, N-terminal domain"/>
    <property type="match status" value="1"/>
</dbReference>
<dbReference type="HAMAP" id="MF_00741">
    <property type="entry name" value="AIRS"/>
    <property type="match status" value="1"/>
</dbReference>
<dbReference type="InterPro" id="IPR010918">
    <property type="entry name" value="PurM-like_C_dom"/>
</dbReference>
<dbReference type="InterPro" id="IPR036676">
    <property type="entry name" value="PurM-like_C_sf"/>
</dbReference>
<dbReference type="InterPro" id="IPR016188">
    <property type="entry name" value="PurM-like_N"/>
</dbReference>
<dbReference type="InterPro" id="IPR036921">
    <property type="entry name" value="PurM-like_N_sf"/>
</dbReference>
<dbReference type="InterPro" id="IPR004733">
    <property type="entry name" value="PurM_cligase"/>
</dbReference>
<dbReference type="NCBIfam" id="TIGR00878">
    <property type="entry name" value="purM"/>
    <property type="match status" value="1"/>
</dbReference>
<dbReference type="PANTHER" id="PTHR10520:SF12">
    <property type="entry name" value="TRIFUNCTIONAL PURINE BIOSYNTHETIC PROTEIN ADENOSINE-3"/>
    <property type="match status" value="1"/>
</dbReference>
<dbReference type="PANTHER" id="PTHR10520">
    <property type="entry name" value="TRIFUNCTIONAL PURINE BIOSYNTHETIC PROTEIN ADENOSINE-3-RELATED"/>
    <property type="match status" value="1"/>
</dbReference>
<dbReference type="Pfam" id="PF00586">
    <property type="entry name" value="AIRS"/>
    <property type="match status" value="1"/>
</dbReference>
<dbReference type="Pfam" id="PF02769">
    <property type="entry name" value="AIRS_C"/>
    <property type="match status" value="1"/>
</dbReference>
<dbReference type="SUPFAM" id="SSF56042">
    <property type="entry name" value="PurM C-terminal domain-like"/>
    <property type="match status" value="1"/>
</dbReference>
<dbReference type="SUPFAM" id="SSF55326">
    <property type="entry name" value="PurM N-terminal domain-like"/>
    <property type="match status" value="1"/>
</dbReference>
<feature type="chain" id="PRO_1000193036" description="Phosphoribosylformylglycinamidine cyclo-ligase">
    <location>
        <begin position="1"/>
        <end position="352"/>
    </location>
</feature>
<name>PUR5_PSEPW</name>